<evidence type="ECO:0000255" key="1">
    <source>
        <dbReference type="HAMAP-Rule" id="MF_00176"/>
    </source>
</evidence>
<accession>Q6AMD2</accession>
<protein>
    <recommendedName>
        <fullName evidence="1">Serine--tRNA ligase</fullName>
        <ecNumber evidence="1">6.1.1.11</ecNumber>
    </recommendedName>
    <alternativeName>
        <fullName evidence="1">Seryl-tRNA synthetase</fullName>
        <shortName evidence="1">SerRS</shortName>
    </alternativeName>
    <alternativeName>
        <fullName evidence="1">Seryl-tRNA(Ser/Sec) synthetase</fullName>
    </alternativeName>
</protein>
<organism>
    <name type="scientific">Desulfotalea psychrophila (strain LSv54 / DSM 12343)</name>
    <dbReference type="NCBI Taxonomy" id="177439"/>
    <lineage>
        <taxon>Bacteria</taxon>
        <taxon>Pseudomonadati</taxon>
        <taxon>Thermodesulfobacteriota</taxon>
        <taxon>Desulfobulbia</taxon>
        <taxon>Desulfobulbales</taxon>
        <taxon>Desulfocapsaceae</taxon>
        <taxon>Desulfotalea</taxon>
    </lineage>
</organism>
<sequence>MLELRFIRENLDLVQERCNRRGMSDELITSFTEIDQKRLSTLAEVESLKNKRNVASKEIAELKRGTDEQKLEAEPLILEMRQIGDKIKILDTSLNQIQEDLDKVVMAIPNLCQDDVPVGNSDEENIELRVWGKKPEFTFTPKAHYELGEEADTIDFERAAKISGARFAILKGFASRLDRALTNFMLDLHTQKHGYTEVLPPFLVNSASLTATGQLPKFKEDLFAIKDWDLYLIPTAEVPVTNIHRDETIAEQDLPIKYTAFTPCFRSEAGSHGRDTRGLVRQHQFNKVELVKFTTPERSTDELESLLGDAEEVLQLLGLHYRVVKLCTGDLGFSSSKTYDIEVWLPGQQKYREISSCSNFLDFQARRGGIRYRPEGQKKSKLVHTLNGSGLAVGRTLLAVMENYQQEDGSITIPEVLKPYFENRF</sequence>
<comment type="function">
    <text evidence="1">Catalyzes the attachment of serine to tRNA(Ser). Is also able to aminoacylate tRNA(Sec) with serine, to form the misacylated tRNA L-seryl-tRNA(Sec), which will be further converted into selenocysteinyl-tRNA(Sec).</text>
</comment>
<comment type="catalytic activity">
    <reaction evidence="1">
        <text>tRNA(Ser) + L-serine + ATP = L-seryl-tRNA(Ser) + AMP + diphosphate + H(+)</text>
        <dbReference type="Rhea" id="RHEA:12292"/>
        <dbReference type="Rhea" id="RHEA-COMP:9669"/>
        <dbReference type="Rhea" id="RHEA-COMP:9703"/>
        <dbReference type="ChEBI" id="CHEBI:15378"/>
        <dbReference type="ChEBI" id="CHEBI:30616"/>
        <dbReference type="ChEBI" id="CHEBI:33019"/>
        <dbReference type="ChEBI" id="CHEBI:33384"/>
        <dbReference type="ChEBI" id="CHEBI:78442"/>
        <dbReference type="ChEBI" id="CHEBI:78533"/>
        <dbReference type="ChEBI" id="CHEBI:456215"/>
        <dbReference type="EC" id="6.1.1.11"/>
    </reaction>
</comment>
<comment type="catalytic activity">
    <reaction evidence="1">
        <text>tRNA(Sec) + L-serine + ATP = L-seryl-tRNA(Sec) + AMP + diphosphate + H(+)</text>
        <dbReference type="Rhea" id="RHEA:42580"/>
        <dbReference type="Rhea" id="RHEA-COMP:9742"/>
        <dbReference type="Rhea" id="RHEA-COMP:10128"/>
        <dbReference type="ChEBI" id="CHEBI:15378"/>
        <dbReference type="ChEBI" id="CHEBI:30616"/>
        <dbReference type="ChEBI" id="CHEBI:33019"/>
        <dbReference type="ChEBI" id="CHEBI:33384"/>
        <dbReference type="ChEBI" id="CHEBI:78442"/>
        <dbReference type="ChEBI" id="CHEBI:78533"/>
        <dbReference type="ChEBI" id="CHEBI:456215"/>
        <dbReference type="EC" id="6.1.1.11"/>
    </reaction>
</comment>
<comment type="pathway">
    <text evidence="1">Aminoacyl-tRNA biosynthesis; selenocysteinyl-tRNA(Sec) biosynthesis; L-seryl-tRNA(Sec) from L-serine and tRNA(Sec): step 1/1.</text>
</comment>
<comment type="subunit">
    <text evidence="1">Homodimer. The tRNA molecule binds across the dimer.</text>
</comment>
<comment type="subcellular location">
    <subcellularLocation>
        <location evidence="1">Cytoplasm</location>
    </subcellularLocation>
</comment>
<comment type="domain">
    <text evidence="1">Consists of two distinct domains, a catalytic core and a N-terminal extension that is involved in tRNA binding.</text>
</comment>
<comment type="similarity">
    <text evidence="1">Belongs to the class-II aminoacyl-tRNA synthetase family. Type-1 seryl-tRNA synthetase subfamily.</text>
</comment>
<feature type="chain" id="PRO_0000122042" description="Serine--tRNA ligase">
    <location>
        <begin position="1"/>
        <end position="425"/>
    </location>
</feature>
<feature type="binding site" evidence="1">
    <location>
        <begin position="235"/>
        <end position="237"/>
    </location>
    <ligand>
        <name>L-serine</name>
        <dbReference type="ChEBI" id="CHEBI:33384"/>
    </ligand>
</feature>
<feature type="binding site" evidence="1">
    <location>
        <begin position="266"/>
        <end position="268"/>
    </location>
    <ligand>
        <name>ATP</name>
        <dbReference type="ChEBI" id="CHEBI:30616"/>
    </ligand>
</feature>
<feature type="binding site" evidence="1">
    <location>
        <position position="289"/>
    </location>
    <ligand>
        <name>L-serine</name>
        <dbReference type="ChEBI" id="CHEBI:33384"/>
    </ligand>
</feature>
<feature type="binding site" evidence="1">
    <location>
        <begin position="353"/>
        <end position="356"/>
    </location>
    <ligand>
        <name>ATP</name>
        <dbReference type="ChEBI" id="CHEBI:30616"/>
    </ligand>
</feature>
<feature type="binding site" evidence="1">
    <location>
        <position position="389"/>
    </location>
    <ligand>
        <name>L-serine</name>
        <dbReference type="ChEBI" id="CHEBI:33384"/>
    </ligand>
</feature>
<gene>
    <name evidence="1" type="primary">serS</name>
    <name type="ordered locus">DP1764</name>
</gene>
<proteinExistence type="inferred from homology"/>
<name>SYS_DESPS</name>
<keyword id="KW-0030">Aminoacyl-tRNA synthetase</keyword>
<keyword id="KW-0067">ATP-binding</keyword>
<keyword id="KW-0963">Cytoplasm</keyword>
<keyword id="KW-0436">Ligase</keyword>
<keyword id="KW-0547">Nucleotide-binding</keyword>
<keyword id="KW-0648">Protein biosynthesis</keyword>
<keyword id="KW-1185">Reference proteome</keyword>
<reference key="1">
    <citation type="journal article" date="2004" name="Environ. Microbiol.">
        <title>The genome of Desulfotalea psychrophila, a sulfate-reducing bacterium from permanently cold Arctic sediments.</title>
        <authorList>
            <person name="Rabus R."/>
            <person name="Ruepp A."/>
            <person name="Frickey T."/>
            <person name="Rattei T."/>
            <person name="Fartmann B."/>
            <person name="Stark M."/>
            <person name="Bauer M."/>
            <person name="Zibat A."/>
            <person name="Lombardot T."/>
            <person name="Becker I."/>
            <person name="Amann J."/>
            <person name="Gellner K."/>
            <person name="Teeling H."/>
            <person name="Leuschner W.D."/>
            <person name="Gloeckner F.-O."/>
            <person name="Lupas A.N."/>
            <person name="Amann R."/>
            <person name="Klenk H.-P."/>
        </authorList>
    </citation>
    <scope>NUCLEOTIDE SEQUENCE [LARGE SCALE GENOMIC DNA]</scope>
    <source>
        <strain>DSM 12343 / LSv54</strain>
    </source>
</reference>
<dbReference type="EC" id="6.1.1.11" evidence="1"/>
<dbReference type="EMBL" id="CR522870">
    <property type="protein sequence ID" value="CAG36493.1"/>
    <property type="molecule type" value="Genomic_DNA"/>
</dbReference>
<dbReference type="RefSeq" id="WP_011189005.1">
    <property type="nucleotide sequence ID" value="NC_006138.1"/>
</dbReference>
<dbReference type="SMR" id="Q6AMD2"/>
<dbReference type="STRING" id="177439.DP1764"/>
<dbReference type="KEGG" id="dps:DP1764"/>
<dbReference type="eggNOG" id="COG0172">
    <property type="taxonomic scope" value="Bacteria"/>
</dbReference>
<dbReference type="HOGENOM" id="CLU_023797_1_1_7"/>
<dbReference type="OrthoDB" id="9804647at2"/>
<dbReference type="UniPathway" id="UPA00906">
    <property type="reaction ID" value="UER00895"/>
</dbReference>
<dbReference type="Proteomes" id="UP000000602">
    <property type="component" value="Chromosome"/>
</dbReference>
<dbReference type="GO" id="GO:0005737">
    <property type="term" value="C:cytoplasm"/>
    <property type="evidence" value="ECO:0007669"/>
    <property type="project" value="UniProtKB-SubCell"/>
</dbReference>
<dbReference type="GO" id="GO:0005524">
    <property type="term" value="F:ATP binding"/>
    <property type="evidence" value="ECO:0007669"/>
    <property type="project" value="UniProtKB-UniRule"/>
</dbReference>
<dbReference type="GO" id="GO:0004828">
    <property type="term" value="F:serine-tRNA ligase activity"/>
    <property type="evidence" value="ECO:0007669"/>
    <property type="project" value="UniProtKB-UniRule"/>
</dbReference>
<dbReference type="GO" id="GO:0016260">
    <property type="term" value="P:selenocysteine biosynthetic process"/>
    <property type="evidence" value="ECO:0007669"/>
    <property type="project" value="UniProtKB-UniRule"/>
</dbReference>
<dbReference type="GO" id="GO:0006434">
    <property type="term" value="P:seryl-tRNA aminoacylation"/>
    <property type="evidence" value="ECO:0007669"/>
    <property type="project" value="UniProtKB-UniRule"/>
</dbReference>
<dbReference type="CDD" id="cd00770">
    <property type="entry name" value="SerRS_core"/>
    <property type="match status" value="1"/>
</dbReference>
<dbReference type="Gene3D" id="3.30.930.10">
    <property type="entry name" value="Bira Bifunctional Protein, Domain 2"/>
    <property type="match status" value="1"/>
</dbReference>
<dbReference type="Gene3D" id="1.10.287.40">
    <property type="entry name" value="Serine-tRNA synthetase, tRNA binding domain"/>
    <property type="match status" value="1"/>
</dbReference>
<dbReference type="HAMAP" id="MF_00176">
    <property type="entry name" value="Ser_tRNA_synth_type1"/>
    <property type="match status" value="1"/>
</dbReference>
<dbReference type="InterPro" id="IPR002314">
    <property type="entry name" value="aa-tRNA-synt_IIb"/>
</dbReference>
<dbReference type="InterPro" id="IPR006195">
    <property type="entry name" value="aa-tRNA-synth_II"/>
</dbReference>
<dbReference type="InterPro" id="IPR045864">
    <property type="entry name" value="aa-tRNA-synth_II/BPL/LPL"/>
</dbReference>
<dbReference type="InterPro" id="IPR002317">
    <property type="entry name" value="Ser-tRNA-ligase_type_1"/>
</dbReference>
<dbReference type="InterPro" id="IPR015866">
    <property type="entry name" value="Ser-tRNA-synth_1_N"/>
</dbReference>
<dbReference type="InterPro" id="IPR042103">
    <property type="entry name" value="SerRS_1_N_sf"/>
</dbReference>
<dbReference type="InterPro" id="IPR033729">
    <property type="entry name" value="SerRS_core"/>
</dbReference>
<dbReference type="InterPro" id="IPR010978">
    <property type="entry name" value="tRNA-bd_arm"/>
</dbReference>
<dbReference type="NCBIfam" id="TIGR00414">
    <property type="entry name" value="serS"/>
    <property type="match status" value="1"/>
</dbReference>
<dbReference type="PANTHER" id="PTHR43697:SF1">
    <property type="entry name" value="SERINE--TRNA LIGASE"/>
    <property type="match status" value="1"/>
</dbReference>
<dbReference type="PANTHER" id="PTHR43697">
    <property type="entry name" value="SERYL-TRNA SYNTHETASE"/>
    <property type="match status" value="1"/>
</dbReference>
<dbReference type="Pfam" id="PF02403">
    <property type="entry name" value="Seryl_tRNA_N"/>
    <property type="match status" value="1"/>
</dbReference>
<dbReference type="Pfam" id="PF00587">
    <property type="entry name" value="tRNA-synt_2b"/>
    <property type="match status" value="1"/>
</dbReference>
<dbReference type="PIRSF" id="PIRSF001529">
    <property type="entry name" value="Ser-tRNA-synth_IIa"/>
    <property type="match status" value="1"/>
</dbReference>
<dbReference type="PRINTS" id="PR00981">
    <property type="entry name" value="TRNASYNTHSER"/>
</dbReference>
<dbReference type="SUPFAM" id="SSF55681">
    <property type="entry name" value="Class II aaRS and biotin synthetases"/>
    <property type="match status" value="1"/>
</dbReference>
<dbReference type="SUPFAM" id="SSF46589">
    <property type="entry name" value="tRNA-binding arm"/>
    <property type="match status" value="1"/>
</dbReference>
<dbReference type="PROSITE" id="PS50862">
    <property type="entry name" value="AA_TRNA_LIGASE_II"/>
    <property type="match status" value="1"/>
</dbReference>